<dbReference type="EC" id="3.1.26.4"/>
<dbReference type="EMBL" id="AL157959">
    <property type="protein sequence ID" value="CAM07394.1"/>
    <property type="molecule type" value="Genomic_DNA"/>
</dbReference>
<dbReference type="PIR" id="B81999">
    <property type="entry name" value="B81999"/>
</dbReference>
<dbReference type="RefSeq" id="WP_002236613.1">
    <property type="nucleotide sequence ID" value="NC_003116.1"/>
</dbReference>
<dbReference type="SMR" id="Q9JX40"/>
<dbReference type="EnsemblBacteria" id="CAM07394">
    <property type="protein sequence ID" value="CAM07394"/>
    <property type="gene ID" value="NMA0075"/>
</dbReference>
<dbReference type="GeneID" id="93387271"/>
<dbReference type="KEGG" id="nma:NMA0075"/>
<dbReference type="HOGENOM" id="CLU_036532_3_2_4"/>
<dbReference type="Proteomes" id="UP000000626">
    <property type="component" value="Chromosome"/>
</dbReference>
<dbReference type="GO" id="GO:0005737">
    <property type="term" value="C:cytoplasm"/>
    <property type="evidence" value="ECO:0007669"/>
    <property type="project" value="UniProtKB-SubCell"/>
</dbReference>
<dbReference type="GO" id="GO:0032299">
    <property type="term" value="C:ribonuclease H2 complex"/>
    <property type="evidence" value="ECO:0007669"/>
    <property type="project" value="TreeGrafter"/>
</dbReference>
<dbReference type="GO" id="GO:0030145">
    <property type="term" value="F:manganese ion binding"/>
    <property type="evidence" value="ECO:0007669"/>
    <property type="project" value="UniProtKB-UniRule"/>
</dbReference>
<dbReference type="GO" id="GO:0003723">
    <property type="term" value="F:RNA binding"/>
    <property type="evidence" value="ECO:0007669"/>
    <property type="project" value="InterPro"/>
</dbReference>
<dbReference type="GO" id="GO:0004523">
    <property type="term" value="F:RNA-DNA hybrid ribonuclease activity"/>
    <property type="evidence" value="ECO:0007669"/>
    <property type="project" value="UniProtKB-UniRule"/>
</dbReference>
<dbReference type="GO" id="GO:0043137">
    <property type="term" value="P:DNA replication, removal of RNA primer"/>
    <property type="evidence" value="ECO:0007669"/>
    <property type="project" value="TreeGrafter"/>
</dbReference>
<dbReference type="GO" id="GO:0006298">
    <property type="term" value="P:mismatch repair"/>
    <property type="evidence" value="ECO:0007669"/>
    <property type="project" value="TreeGrafter"/>
</dbReference>
<dbReference type="CDD" id="cd07182">
    <property type="entry name" value="RNase_HII_bacteria_HII_like"/>
    <property type="match status" value="1"/>
</dbReference>
<dbReference type="FunFam" id="3.30.420.10:FF:000006">
    <property type="entry name" value="Ribonuclease HII"/>
    <property type="match status" value="1"/>
</dbReference>
<dbReference type="Gene3D" id="3.30.420.10">
    <property type="entry name" value="Ribonuclease H-like superfamily/Ribonuclease H"/>
    <property type="match status" value="1"/>
</dbReference>
<dbReference type="HAMAP" id="MF_00052_B">
    <property type="entry name" value="RNase_HII_B"/>
    <property type="match status" value="1"/>
</dbReference>
<dbReference type="InterPro" id="IPR022898">
    <property type="entry name" value="RNase_HII"/>
</dbReference>
<dbReference type="InterPro" id="IPR001352">
    <property type="entry name" value="RNase_HII/HIII"/>
</dbReference>
<dbReference type="InterPro" id="IPR024567">
    <property type="entry name" value="RNase_HII/HIII_dom"/>
</dbReference>
<dbReference type="InterPro" id="IPR012337">
    <property type="entry name" value="RNaseH-like_sf"/>
</dbReference>
<dbReference type="InterPro" id="IPR036397">
    <property type="entry name" value="RNaseH_sf"/>
</dbReference>
<dbReference type="NCBIfam" id="NF000595">
    <property type="entry name" value="PRK00015.1-3"/>
    <property type="match status" value="1"/>
</dbReference>
<dbReference type="NCBIfam" id="NF000596">
    <property type="entry name" value="PRK00015.1-4"/>
    <property type="match status" value="1"/>
</dbReference>
<dbReference type="PANTHER" id="PTHR10954">
    <property type="entry name" value="RIBONUCLEASE H2 SUBUNIT A"/>
    <property type="match status" value="1"/>
</dbReference>
<dbReference type="PANTHER" id="PTHR10954:SF18">
    <property type="entry name" value="RIBONUCLEASE HII"/>
    <property type="match status" value="1"/>
</dbReference>
<dbReference type="Pfam" id="PF01351">
    <property type="entry name" value="RNase_HII"/>
    <property type="match status" value="1"/>
</dbReference>
<dbReference type="SUPFAM" id="SSF53098">
    <property type="entry name" value="Ribonuclease H-like"/>
    <property type="match status" value="1"/>
</dbReference>
<dbReference type="PROSITE" id="PS51975">
    <property type="entry name" value="RNASE_H_2"/>
    <property type="match status" value="1"/>
</dbReference>
<reference key="1">
    <citation type="journal article" date="2000" name="Nature">
        <title>Complete DNA sequence of a serogroup A strain of Neisseria meningitidis Z2491.</title>
        <authorList>
            <person name="Parkhill J."/>
            <person name="Achtman M."/>
            <person name="James K.D."/>
            <person name="Bentley S.D."/>
            <person name="Churcher C.M."/>
            <person name="Klee S.R."/>
            <person name="Morelli G."/>
            <person name="Basham D."/>
            <person name="Brown D."/>
            <person name="Chillingworth T."/>
            <person name="Davies R.M."/>
            <person name="Davis P."/>
            <person name="Devlin K."/>
            <person name="Feltwell T."/>
            <person name="Hamlin N."/>
            <person name="Holroyd S."/>
            <person name="Jagels K."/>
            <person name="Leather S."/>
            <person name="Moule S."/>
            <person name="Mungall K.L."/>
            <person name="Quail M.A."/>
            <person name="Rajandream M.A."/>
            <person name="Rutherford K.M."/>
            <person name="Simmonds M."/>
            <person name="Skelton J."/>
            <person name="Whitehead S."/>
            <person name="Spratt B.G."/>
            <person name="Barrell B.G."/>
        </authorList>
    </citation>
    <scope>NUCLEOTIDE SEQUENCE [LARGE SCALE GENOMIC DNA]</scope>
    <source>
        <strain>DSM 15465 / Z2491</strain>
    </source>
</reference>
<protein>
    <recommendedName>
        <fullName>Ribonuclease HII</fullName>
        <shortName>RNase HII</shortName>
        <ecNumber>3.1.26.4</ecNumber>
    </recommendedName>
</protein>
<name>RNH2_NEIMA</name>
<comment type="function">
    <text evidence="1">Endonuclease that specifically degrades the RNA of RNA-DNA hybrids.</text>
</comment>
<comment type="catalytic activity">
    <reaction>
        <text>Endonucleolytic cleavage to 5'-phosphomonoester.</text>
        <dbReference type="EC" id="3.1.26.4"/>
    </reaction>
</comment>
<comment type="cofactor">
    <cofactor evidence="1">
        <name>Mn(2+)</name>
        <dbReference type="ChEBI" id="CHEBI:29035"/>
    </cofactor>
    <cofactor evidence="1">
        <name>Mg(2+)</name>
        <dbReference type="ChEBI" id="CHEBI:18420"/>
    </cofactor>
    <text evidence="1">Manganese or magnesium. Binds 1 divalent metal ion per monomer in the absence of substrate. May bind a second metal ion after substrate binding.</text>
</comment>
<comment type="subcellular location">
    <subcellularLocation>
        <location evidence="3">Cytoplasm</location>
    </subcellularLocation>
</comment>
<comment type="similarity">
    <text evidence="3">Belongs to the RNase HII family.</text>
</comment>
<keyword id="KW-0963">Cytoplasm</keyword>
<keyword id="KW-0255">Endonuclease</keyword>
<keyword id="KW-0378">Hydrolase</keyword>
<keyword id="KW-0464">Manganese</keyword>
<keyword id="KW-0479">Metal-binding</keyword>
<keyword id="KW-0540">Nuclease</keyword>
<organism>
    <name type="scientific">Neisseria meningitidis serogroup A / serotype 4A (strain DSM 15465 / Z2491)</name>
    <dbReference type="NCBI Taxonomy" id="122587"/>
    <lineage>
        <taxon>Bacteria</taxon>
        <taxon>Pseudomonadati</taxon>
        <taxon>Pseudomonadota</taxon>
        <taxon>Betaproteobacteria</taxon>
        <taxon>Neisseriales</taxon>
        <taxon>Neisseriaceae</taxon>
        <taxon>Neisseria</taxon>
    </lineage>
</organism>
<accession>Q9JX40</accession>
<accession>A1INT7</accession>
<sequence length="194" mass="21118">MHILTAGVDEAGRGPLVGSVFAAAVILPETFDLPGLTDSKKLSEKKRDALAEMIKNQAVAWHVAAAGPEEIASLNILHATMLAMKRAVDGLAVRPEKIFIDGNRIPEHLNIPAEAVVKGDSKIIEISAASVLAKTARDAEMYALAQRHPQYGFDKHKGYGTKQHLEALEKYGVLPEHRRDFAPVRNLLAQQALF</sequence>
<evidence type="ECO:0000250" key="1"/>
<evidence type="ECO:0000255" key="2">
    <source>
        <dbReference type="PROSITE-ProRule" id="PRU01319"/>
    </source>
</evidence>
<evidence type="ECO:0000305" key="3"/>
<feature type="chain" id="PRO_0000111594" description="Ribonuclease HII">
    <location>
        <begin position="1"/>
        <end position="194"/>
    </location>
</feature>
<feature type="domain" description="RNase H type-2" evidence="2">
    <location>
        <begin position="3"/>
        <end position="193"/>
    </location>
</feature>
<feature type="binding site" evidence="1">
    <location>
        <position position="9"/>
    </location>
    <ligand>
        <name>a divalent metal cation</name>
        <dbReference type="ChEBI" id="CHEBI:60240"/>
    </ligand>
</feature>
<feature type="binding site" evidence="1">
    <location>
        <position position="10"/>
    </location>
    <ligand>
        <name>a divalent metal cation</name>
        <dbReference type="ChEBI" id="CHEBI:60240"/>
    </ligand>
</feature>
<feature type="binding site" evidence="1">
    <location>
        <position position="101"/>
    </location>
    <ligand>
        <name>a divalent metal cation</name>
        <dbReference type="ChEBI" id="CHEBI:60240"/>
    </ligand>
</feature>
<gene>
    <name type="primary">rnhB</name>
    <name type="ordered locus">NMA0075</name>
</gene>
<proteinExistence type="inferred from homology"/>